<name>FAPR_BACC1</name>
<feature type="chain" id="PRO_0000172813" description="Transcription factor FapR">
    <location>
        <begin position="1"/>
        <end position="197"/>
    </location>
</feature>
<protein>
    <recommendedName>
        <fullName evidence="1">Transcription factor FapR</fullName>
    </recommendedName>
    <alternativeName>
        <fullName evidence="1">Fatty acid and phospholipid biosynthesis regulator</fullName>
    </alternativeName>
</protein>
<organism>
    <name type="scientific">Bacillus cereus (strain ATCC 10987 / NRS 248)</name>
    <dbReference type="NCBI Taxonomy" id="222523"/>
    <lineage>
        <taxon>Bacteria</taxon>
        <taxon>Bacillati</taxon>
        <taxon>Bacillota</taxon>
        <taxon>Bacilli</taxon>
        <taxon>Bacillales</taxon>
        <taxon>Bacillaceae</taxon>
        <taxon>Bacillus</taxon>
        <taxon>Bacillus cereus group</taxon>
    </lineage>
</organism>
<keyword id="KW-0238">DNA-binding</keyword>
<keyword id="KW-0275">Fatty acid biosynthesis</keyword>
<keyword id="KW-0276">Fatty acid metabolism</keyword>
<keyword id="KW-0444">Lipid biosynthesis</keyword>
<keyword id="KW-0443">Lipid metabolism</keyword>
<keyword id="KW-0678">Repressor</keyword>
<keyword id="KW-0804">Transcription</keyword>
<keyword id="KW-0805">Transcription regulation</keyword>
<accession>Q732L6</accession>
<dbReference type="EMBL" id="AE017194">
    <property type="protein sequence ID" value="AAS42801.1"/>
    <property type="molecule type" value="Genomic_DNA"/>
</dbReference>
<dbReference type="SMR" id="Q732L6"/>
<dbReference type="KEGG" id="bca:BCE_3896"/>
<dbReference type="HOGENOM" id="CLU_095708_0_0_9"/>
<dbReference type="Proteomes" id="UP000002527">
    <property type="component" value="Chromosome"/>
</dbReference>
<dbReference type="GO" id="GO:0003677">
    <property type="term" value="F:DNA binding"/>
    <property type="evidence" value="ECO:0007669"/>
    <property type="project" value="UniProtKB-KW"/>
</dbReference>
<dbReference type="GO" id="GO:0003700">
    <property type="term" value="F:DNA-binding transcription factor activity"/>
    <property type="evidence" value="ECO:0007669"/>
    <property type="project" value="UniProtKB-UniRule"/>
</dbReference>
<dbReference type="GO" id="GO:0006633">
    <property type="term" value="P:fatty acid biosynthetic process"/>
    <property type="evidence" value="ECO:0007669"/>
    <property type="project" value="UniProtKB-KW"/>
</dbReference>
<dbReference type="GO" id="GO:0045892">
    <property type="term" value="P:negative regulation of DNA-templated transcription"/>
    <property type="evidence" value="ECO:0007669"/>
    <property type="project" value="UniProtKB-UniRule"/>
</dbReference>
<dbReference type="GO" id="GO:0045717">
    <property type="term" value="P:negative regulation of fatty acid biosynthetic process"/>
    <property type="evidence" value="ECO:0007669"/>
    <property type="project" value="UniProtKB-UniRule"/>
</dbReference>
<dbReference type="CDD" id="cd03440">
    <property type="entry name" value="hot_dog"/>
    <property type="match status" value="1"/>
</dbReference>
<dbReference type="Gene3D" id="3.10.129.10">
    <property type="entry name" value="Hotdog Thioesterase"/>
    <property type="match status" value="1"/>
</dbReference>
<dbReference type="Gene3D" id="1.10.10.10">
    <property type="entry name" value="Winged helix-like DNA-binding domain superfamily/Winged helix DNA-binding domain"/>
    <property type="match status" value="1"/>
</dbReference>
<dbReference type="HAMAP" id="MF_01814">
    <property type="entry name" value="Transcrip_fact_FapR"/>
    <property type="match status" value="1"/>
</dbReference>
<dbReference type="InterPro" id="IPR029069">
    <property type="entry name" value="HotDog_dom_sf"/>
</dbReference>
<dbReference type="InterPro" id="IPR006683">
    <property type="entry name" value="Thioestr_dom"/>
</dbReference>
<dbReference type="InterPro" id="IPR017275">
    <property type="entry name" value="Transcription_factor_FapR"/>
</dbReference>
<dbReference type="InterPro" id="IPR036388">
    <property type="entry name" value="WH-like_DNA-bd_sf"/>
</dbReference>
<dbReference type="InterPro" id="IPR036390">
    <property type="entry name" value="WH_DNA-bd_sf"/>
</dbReference>
<dbReference type="NCBIfam" id="NF003359">
    <property type="entry name" value="PRK04424.1"/>
    <property type="match status" value="1"/>
</dbReference>
<dbReference type="Pfam" id="PF03061">
    <property type="entry name" value="4HBT"/>
    <property type="match status" value="1"/>
</dbReference>
<dbReference type="PIRSF" id="PIRSF037733">
    <property type="entry name" value="Transcription_factor_FapR"/>
    <property type="match status" value="1"/>
</dbReference>
<dbReference type="SUPFAM" id="SSF54637">
    <property type="entry name" value="Thioesterase/thiol ester dehydrase-isomerase"/>
    <property type="match status" value="1"/>
</dbReference>
<dbReference type="SUPFAM" id="SSF46785">
    <property type="entry name" value="Winged helix' DNA-binding domain"/>
    <property type="match status" value="1"/>
</dbReference>
<sequence>MKKRRSKKERQELLQQTIETNPFITDEDLAEKFQVSIQTVRLDRMELSIPELRERIKHVATKQHEEDVKSLPLEEVVGEIIDIELDRHAISIFEVKVEHVFKRNQIARGHHLFAQANSLAVAVIDEELALTAKSTIRYIRPVKLGERVVAKARVEDVENDKGRTVVKVRSFVGEELVFTGTFEMYRSSNYSEEGNNL</sequence>
<proteinExistence type="inferred from homology"/>
<reference key="1">
    <citation type="journal article" date="2004" name="Nucleic Acids Res.">
        <title>The genome sequence of Bacillus cereus ATCC 10987 reveals metabolic adaptations and a large plasmid related to Bacillus anthracis pXO1.</title>
        <authorList>
            <person name="Rasko D.A."/>
            <person name="Ravel J."/>
            <person name="Oekstad O.A."/>
            <person name="Helgason E."/>
            <person name="Cer R.Z."/>
            <person name="Jiang L."/>
            <person name="Shores K.A."/>
            <person name="Fouts D.E."/>
            <person name="Tourasse N.J."/>
            <person name="Angiuoli S.V."/>
            <person name="Kolonay J.F."/>
            <person name="Nelson W.C."/>
            <person name="Kolstoe A.-B."/>
            <person name="Fraser C.M."/>
            <person name="Read T.D."/>
        </authorList>
    </citation>
    <scope>NUCLEOTIDE SEQUENCE [LARGE SCALE GENOMIC DNA]</scope>
    <source>
        <strain>ATCC 10987 / NRS 248</strain>
    </source>
</reference>
<evidence type="ECO:0000255" key="1">
    <source>
        <dbReference type="HAMAP-Rule" id="MF_01814"/>
    </source>
</evidence>
<gene>
    <name evidence="1" type="primary">fapR</name>
    <name type="ordered locus">BCE_3896</name>
</gene>
<comment type="function">
    <text evidence="1">Transcriptional factor involved in regulation of membrane lipid biosynthesis by repressing genes involved in fatty acid and phospholipid metabolism.</text>
</comment>
<comment type="similarity">
    <text evidence="1">Belongs to the FapR family.</text>
</comment>